<sequence length="463" mass="52215">MNYQSYSDTICAISSGNNINQPISIIRISGKNAQSIVSKIFSGKVGENKTITYGFIKENSEIVDEVLVSWFLGEPQGDITVYNNYVGEPLIEINAHGGMIVTNKILELLISNGARLAEPGEFTRRAFLNGKLDLSKADAIHNLIMSKTRLQARNEASKLKGSASKVIKDLLKELSLLIGSIEVGIDYPEYIDDYEEDLKANSKEDINLTRINKLIARLEKIVKSSETALNYFEGIKLAIVGKPNVGKSSLLNTMLKEDKAIVTNVAGTTRDIVEGIYYLDNFIFKIIDTAGIRKTRQEIEKIGIERSYKAILDADIVLHLFDNLNSEDEFDLDIKKIVQENNKNYIKVVNKSDLKSDIKWSDDFIKISAKNNDIKNLEDHLLKIYSGFDFNSEDIFATARQIKLFKESLEYAYAAREEIKNQLTYITAIVDLNNLFDTLQLIIGNSNREDLLDEMFKNFCLGK</sequence>
<protein>
    <recommendedName>
        <fullName evidence="1">tRNA modification GTPase MnmE</fullName>
        <ecNumber evidence="1">3.6.-.-</ecNumber>
    </recommendedName>
</protein>
<keyword id="KW-0963">Cytoplasm</keyword>
<keyword id="KW-0342">GTP-binding</keyword>
<keyword id="KW-0378">Hydrolase</keyword>
<keyword id="KW-0460">Magnesium</keyword>
<keyword id="KW-0479">Metal-binding</keyword>
<keyword id="KW-0547">Nucleotide-binding</keyword>
<keyword id="KW-0630">Potassium</keyword>
<keyword id="KW-1185">Reference proteome</keyword>
<keyword id="KW-0819">tRNA processing</keyword>
<organism>
    <name type="scientific">Mycoplasmopsis synoviae (strain 53)</name>
    <name type="common">Mycoplasma synoviae</name>
    <dbReference type="NCBI Taxonomy" id="262723"/>
    <lineage>
        <taxon>Bacteria</taxon>
        <taxon>Bacillati</taxon>
        <taxon>Mycoplasmatota</taxon>
        <taxon>Mycoplasmoidales</taxon>
        <taxon>Metamycoplasmataceae</taxon>
        <taxon>Mycoplasmopsis</taxon>
    </lineage>
</organism>
<proteinExistence type="inferred from homology"/>
<accession>Q4A647</accession>
<gene>
    <name evidence="1" type="primary">mnmE</name>
    <name evidence="1" type="synonym">trmE</name>
    <name type="ordered locus">MS53_0362</name>
</gene>
<name>MNME_MYCS5</name>
<reference key="1">
    <citation type="journal article" date="2005" name="J. Bacteriol.">
        <title>Swine and poultry pathogens: the complete genome sequences of two strains of Mycoplasma hyopneumoniae and a strain of Mycoplasma synoviae.</title>
        <authorList>
            <person name="Vasconcelos A.T.R."/>
            <person name="Ferreira H.B."/>
            <person name="Bizarro C.V."/>
            <person name="Bonatto S.L."/>
            <person name="Carvalho M.O."/>
            <person name="Pinto P.M."/>
            <person name="Almeida D.F."/>
            <person name="Almeida L.G.P."/>
            <person name="Almeida R."/>
            <person name="Alves-Junior L."/>
            <person name="Assuncao E.N."/>
            <person name="Azevedo V.A.C."/>
            <person name="Bogo M.R."/>
            <person name="Brigido M.M."/>
            <person name="Brocchi M."/>
            <person name="Burity H.A."/>
            <person name="Camargo A.A."/>
            <person name="Camargo S.S."/>
            <person name="Carepo M.S."/>
            <person name="Carraro D.M."/>
            <person name="de Mattos Cascardo J.C."/>
            <person name="Castro L.A."/>
            <person name="Cavalcanti G."/>
            <person name="Chemale G."/>
            <person name="Collevatti R.G."/>
            <person name="Cunha C.W."/>
            <person name="Dallagiovanna B."/>
            <person name="Dambros B.P."/>
            <person name="Dellagostin O.A."/>
            <person name="Falcao C."/>
            <person name="Fantinatti-Garboggini F."/>
            <person name="Felipe M.S.S."/>
            <person name="Fiorentin L."/>
            <person name="Franco G.R."/>
            <person name="Freitas N.S.A."/>
            <person name="Frias D."/>
            <person name="Grangeiro T.B."/>
            <person name="Grisard E.C."/>
            <person name="Guimaraes C.T."/>
            <person name="Hungria M."/>
            <person name="Jardim S.N."/>
            <person name="Krieger M.A."/>
            <person name="Laurino J.P."/>
            <person name="Lima L.F.A."/>
            <person name="Lopes M.I."/>
            <person name="Loreto E.L.S."/>
            <person name="Madeira H.M.F."/>
            <person name="Manfio G.P."/>
            <person name="Maranhao A.Q."/>
            <person name="Martinkovics C.T."/>
            <person name="Medeiros S.R.B."/>
            <person name="Moreira M.A.M."/>
            <person name="Neiva M."/>
            <person name="Ramalho-Neto C.E."/>
            <person name="Nicolas M.F."/>
            <person name="Oliveira S.C."/>
            <person name="Paixao R.F.C."/>
            <person name="Pedrosa F.O."/>
            <person name="Pena S.D.J."/>
            <person name="Pereira M."/>
            <person name="Pereira-Ferrari L."/>
            <person name="Piffer I."/>
            <person name="Pinto L.S."/>
            <person name="Potrich D.P."/>
            <person name="Salim A.C.M."/>
            <person name="Santos F.R."/>
            <person name="Schmitt R."/>
            <person name="Schneider M.P.C."/>
            <person name="Schrank A."/>
            <person name="Schrank I.S."/>
            <person name="Schuck A.F."/>
            <person name="Seuanez H.N."/>
            <person name="Silva D.W."/>
            <person name="Silva R."/>
            <person name="Silva S.C."/>
            <person name="Soares C.M.A."/>
            <person name="Souza K.R.L."/>
            <person name="Souza R.C."/>
            <person name="Staats C.C."/>
            <person name="Steffens M.B.R."/>
            <person name="Teixeira S.M.R."/>
            <person name="Urmenyi T.P."/>
            <person name="Vainstein M.H."/>
            <person name="Zuccherato L.W."/>
            <person name="Simpson A.J.G."/>
            <person name="Zaha A."/>
        </authorList>
    </citation>
    <scope>NUCLEOTIDE SEQUENCE [LARGE SCALE GENOMIC DNA]</scope>
    <source>
        <strain>53</strain>
    </source>
</reference>
<dbReference type="EC" id="3.6.-.-" evidence="1"/>
<dbReference type="EMBL" id="AE017245">
    <property type="protein sequence ID" value="AAZ43774.1"/>
    <property type="molecule type" value="Genomic_DNA"/>
</dbReference>
<dbReference type="RefSeq" id="WP_011283505.1">
    <property type="nucleotide sequence ID" value="NC_007294.1"/>
</dbReference>
<dbReference type="SMR" id="Q4A647"/>
<dbReference type="STRING" id="262723.MS53_0362"/>
<dbReference type="KEGG" id="msy:MS53_0362"/>
<dbReference type="eggNOG" id="COG0486">
    <property type="taxonomic scope" value="Bacteria"/>
</dbReference>
<dbReference type="HOGENOM" id="CLU_019624_4_1_14"/>
<dbReference type="OrthoDB" id="9805918at2"/>
<dbReference type="Proteomes" id="UP000000549">
    <property type="component" value="Chromosome"/>
</dbReference>
<dbReference type="GO" id="GO:0005829">
    <property type="term" value="C:cytosol"/>
    <property type="evidence" value="ECO:0007669"/>
    <property type="project" value="TreeGrafter"/>
</dbReference>
<dbReference type="GO" id="GO:0005525">
    <property type="term" value="F:GTP binding"/>
    <property type="evidence" value="ECO:0007669"/>
    <property type="project" value="UniProtKB-UniRule"/>
</dbReference>
<dbReference type="GO" id="GO:0003924">
    <property type="term" value="F:GTPase activity"/>
    <property type="evidence" value="ECO:0007669"/>
    <property type="project" value="UniProtKB-UniRule"/>
</dbReference>
<dbReference type="GO" id="GO:0046872">
    <property type="term" value="F:metal ion binding"/>
    <property type="evidence" value="ECO:0007669"/>
    <property type="project" value="UniProtKB-KW"/>
</dbReference>
<dbReference type="GO" id="GO:0030488">
    <property type="term" value="P:tRNA methylation"/>
    <property type="evidence" value="ECO:0007669"/>
    <property type="project" value="TreeGrafter"/>
</dbReference>
<dbReference type="GO" id="GO:0002098">
    <property type="term" value="P:tRNA wobble uridine modification"/>
    <property type="evidence" value="ECO:0007669"/>
    <property type="project" value="TreeGrafter"/>
</dbReference>
<dbReference type="CDD" id="cd04164">
    <property type="entry name" value="trmE"/>
    <property type="match status" value="1"/>
</dbReference>
<dbReference type="CDD" id="cd14858">
    <property type="entry name" value="TrmE_N"/>
    <property type="match status" value="1"/>
</dbReference>
<dbReference type="Gene3D" id="3.40.50.300">
    <property type="entry name" value="P-loop containing nucleotide triphosphate hydrolases"/>
    <property type="match status" value="1"/>
</dbReference>
<dbReference type="Gene3D" id="3.30.1360.120">
    <property type="entry name" value="Probable tRNA modification gtpase trme, domain 1"/>
    <property type="match status" value="1"/>
</dbReference>
<dbReference type="Gene3D" id="1.20.120.430">
    <property type="entry name" value="tRNA modification GTPase MnmE domain 2"/>
    <property type="match status" value="1"/>
</dbReference>
<dbReference type="HAMAP" id="MF_00379">
    <property type="entry name" value="GTPase_MnmE"/>
    <property type="match status" value="1"/>
</dbReference>
<dbReference type="InterPro" id="IPR031168">
    <property type="entry name" value="G_TrmE"/>
</dbReference>
<dbReference type="InterPro" id="IPR006073">
    <property type="entry name" value="GTP-bd"/>
</dbReference>
<dbReference type="InterPro" id="IPR018948">
    <property type="entry name" value="GTP-bd_TrmE_N"/>
</dbReference>
<dbReference type="InterPro" id="IPR004520">
    <property type="entry name" value="GTPase_MnmE"/>
</dbReference>
<dbReference type="InterPro" id="IPR027368">
    <property type="entry name" value="MnmE_dom2"/>
</dbReference>
<dbReference type="InterPro" id="IPR025867">
    <property type="entry name" value="MnmE_helical"/>
</dbReference>
<dbReference type="InterPro" id="IPR027417">
    <property type="entry name" value="P-loop_NTPase"/>
</dbReference>
<dbReference type="InterPro" id="IPR005225">
    <property type="entry name" value="Small_GTP-bd"/>
</dbReference>
<dbReference type="InterPro" id="IPR027266">
    <property type="entry name" value="TrmE/GcvT_dom1"/>
</dbReference>
<dbReference type="NCBIfam" id="TIGR00450">
    <property type="entry name" value="mnmE_trmE_thdF"/>
    <property type="match status" value="1"/>
</dbReference>
<dbReference type="NCBIfam" id="TIGR00231">
    <property type="entry name" value="small_GTP"/>
    <property type="match status" value="1"/>
</dbReference>
<dbReference type="PANTHER" id="PTHR42714">
    <property type="entry name" value="TRNA MODIFICATION GTPASE GTPBP3"/>
    <property type="match status" value="1"/>
</dbReference>
<dbReference type="PANTHER" id="PTHR42714:SF2">
    <property type="entry name" value="TRNA MODIFICATION GTPASE GTPBP3, MITOCHONDRIAL"/>
    <property type="match status" value="1"/>
</dbReference>
<dbReference type="Pfam" id="PF01926">
    <property type="entry name" value="MMR_HSR1"/>
    <property type="match status" value="1"/>
</dbReference>
<dbReference type="Pfam" id="PF12631">
    <property type="entry name" value="MnmE_helical"/>
    <property type="match status" value="1"/>
</dbReference>
<dbReference type="Pfam" id="PF10396">
    <property type="entry name" value="TrmE_N"/>
    <property type="match status" value="1"/>
</dbReference>
<dbReference type="SUPFAM" id="SSF103025">
    <property type="entry name" value="Folate-binding domain"/>
    <property type="match status" value="1"/>
</dbReference>
<dbReference type="SUPFAM" id="SSF52540">
    <property type="entry name" value="P-loop containing nucleoside triphosphate hydrolases"/>
    <property type="match status" value="1"/>
</dbReference>
<dbReference type="SUPFAM" id="SSF116878">
    <property type="entry name" value="TrmE connector domain"/>
    <property type="match status" value="1"/>
</dbReference>
<dbReference type="PROSITE" id="PS51709">
    <property type="entry name" value="G_TRME"/>
    <property type="match status" value="1"/>
</dbReference>
<feature type="chain" id="PRO_0000345845" description="tRNA modification GTPase MnmE">
    <location>
        <begin position="1"/>
        <end position="463"/>
    </location>
</feature>
<feature type="domain" description="TrmE-type G">
    <location>
        <begin position="234"/>
        <end position="386"/>
    </location>
</feature>
<feature type="binding site" evidence="1">
    <location>
        <position position="27"/>
    </location>
    <ligand>
        <name>(6S)-5-formyl-5,6,7,8-tetrahydrofolate</name>
        <dbReference type="ChEBI" id="CHEBI:57457"/>
    </ligand>
</feature>
<feature type="binding site" evidence="1">
    <location>
        <position position="92"/>
    </location>
    <ligand>
        <name>(6S)-5-formyl-5,6,7,8-tetrahydrofolate</name>
        <dbReference type="ChEBI" id="CHEBI:57457"/>
    </ligand>
</feature>
<feature type="binding site" evidence="1">
    <location>
        <position position="131"/>
    </location>
    <ligand>
        <name>(6S)-5-formyl-5,6,7,8-tetrahydrofolate</name>
        <dbReference type="ChEBI" id="CHEBI:57457"/>
    </ligand>
</feature>
<feature type="binding site" evidence="1">
    <location>
        <begin position="244"/>
        <end position="249"/>
    </location>
    <ligand>
        <name>GTP</name>
        <dbReference type="ChEBI" id="CHEBI:37565"/>
    </ligand>
</feature>
<feature type="binding site" evidence="1">
    <location>
        <position position="244"/>
    </location>
    <ligand>
        <name>K(+)</name>
        <dbReference type="ChEBI" id="CHEBI:29103"/>
    </ligand>
</feature>
<feature type="binding site" evidence="1">
    <location>
        <position position="248"/>
    </location>
    <ligand>
        <name>Mg(2+)</name>
        <dbReference type="ChEBI" id="CHEBI:18420"/>
    </ligand>
</feature>
<feature type="binding site" evidence="1">
    <location>
        <begin position="263"/>
        <end position="269"/>
    </location>
    <ligand>
        <name>GTP</name>
        <dbReference type="ChEBI" id="CHEBI:37565"/>
    </ligand>
</feature>
<feature type="binding site" evidence="1">
    <location>
        <position position="263"/>
    </location>
    <ligand>
        <name>K(+)</name>
        <dbReference type="ChEBI" id="CHEBI:29103"/>
    </ligand>
</feature>
<feature type="binding site" evidence="1">
    <location>
        <position position="265"/>
    </location>
    <ligand>
        <name>K(+)</name>
        <dbReference type="ChEBI" id="CHEBI:29103"/>
    </ligand>
</feature>
<feature type="binding site" evidence="1">
    <location>
        <position position="268"/>
    </location>
    <ligand>
        <name>K(+)</name>
        <dbReference type="ChEBI" id="CHEBI:29103"/>
    </ligand>
</feature>
<feature type="binding site" evidence="1">
    <location>
        <position position="269"/>
    </location>
    <ligand>
        <name>Mg(2+)</name>
        <dbReference type="ChEBI" id="CHEBI:18420"/>
    </ligand>
</feature>
<feature type="binding site" evidence="1">
    <location>
        <begin position="288"/>
        <end position="291"/>
    </location>
    <ligand>
        <name>GTP</name>
        <dbReference type="ChEBI" id="CHEBI:37565"/>
    </ligand>
</feature>
<feature type="binding site" evidence="1">
    <location>
        <position position="463"/>
    </location>
    <ligand>
        <name>(6S)-5-formyl-5,6,7,8-tetrahydrofolate</name>
        <dbReference type="ChEBI" id="CHEBI:57457"/>
    </ligand>
</feature>
<comment type="function">
    <text evidence="1">Exhibits a very high intrinsic GTPase hydrolysis rate. Involved in the addition of a carboxymethylaminomethyl (cmnm) group at the wobble position (U34) of certain tRNAs, forming tRNA-cmnm(5)s(2)U34.</text>
</comment>
<comment type="cofactor">
    <cofactor evidence="1">
        <name>K(+)</name>
        <dbReference type="ChEBI" id="CHEBI:29103"/>
    </cofactor>
    <text evidence="1">Binds 1 potassium ion per subunit.</text>
</comment>
<comment type="subunit">
    <text evidence="1">Homodimer. Heterotetramer of two MnmE and two MnmG subunits.</text>
</comment>
<comment type="subcellular location">
    <subcellularLocation>
        <location evidence="1">Cytoplasm</location>
    </subcellularLocation>
</comment>
<comment type="similarity">
    <text evidence="1">Belongs to the TRAFAC class TrmE-Era-EngA-EngB-Septin-like GTPase superfamily. TrmE GTPase family.</text>
</comment>
<evidence type="ECO:0000255" key="1">
    <source>
        <dbReference type="HAMAP-Rule" id="MF_00379"/>
    </source>
</evidence>